<dbReference type="PIR" id="A03286">
    <property type="entry name" value="SMMR"/>
</dbReference>
<dbReference type="GO" id="GO:0046872">
    <property type="term" value="F:metal ion binding"/>
    <property type="evidence" value="ECO:0007669"/>
    <property type="project" value="UniProtKB-KW"/>
</dbReference>
<feature type="peptide" id="PRO_0000197361" description="Metallothionein">
    <location>
        <begin position="1"/>
        <end position="25"/>
    </location>
</feature>
<feature type="binding site" evidence="1">
    <location>
        <position position="3"/>
    </location>
    <ligand>
        <name>Cu(+)</name>
        <dbReference type="ChEBI" id="CHEBI:49552"/>
        <label>1</label>
    </ligand>
</feature>
<feature type="binding site" evidence="1">
    <location>
        <position position="5"/>
    </location>
    <ligand>
        <name>Cu(+)</name>
        <dbReference type="ChEBI" id="CHEBI:49552"/>
        <label>2</label>
    </ligand>
</feature>
<feature type="binding site" evidence="1">
    <location>
        <position position="5"/>
    </location>
    <ligand>
        <name>Cu(+)</name>
        <dbReference type="ChEBI" id="CHEBI:49552"/>
        <label>3</label>
    </ligand>
</feature>
<feature type="binding site" evidence="1">
    <location>
        <position position="11"/>
    </location>
    <ligand>
        <name>Cu(+)</name>
        <dbReference type="ChEBI" id="CHEBI:49552"/>
        <label>4</label>
    </ligand>
</feature>
<feature type="binding site" evidence="1">
    <location>
        <position position="11"/>
    </location>
    <ligand>
        <name>Cu(+)</name>
        <dbReference type="ChEBI" id="CHEBI:49552"/>
        <label>5</label>
    </ligand>
</feature>
<feature type="binding site" evidence="1">
    <location>
        <position position="13"/>
    </location>
    <ligand>
        <name>Cu(+)</name>
        <dbReference type="ChEBI" id="CHEBI:49552"/>
        <label>6</label>
    </ligand>
</feature>
<feature type="binding site" evidence="1">
    <location>
        <position position="18"/>
    </location>
    <ligand>
        <name>Cu(+)</name>
        <dbReference type="ChEBI" id="CHEBI:49552"/>
        <label>5</label>
    </ligand>
</feature>
<feature type="binding site" evidence="1">
    <location>
        <position position="18"/>
    </location>
    <ligand>
        <name>Cu(+)</name>
        <dbReference type="ChEBI" id="CHEBI:49552"/>
        <label>6</label>
    </ligand>
</feature>
<feature type="binding site" evidence="1">
    <location>
        <position position="20"/>
    </location>
    <ligand>
        <name>Cu(+)</name>
        <dbReference type="ChEBI" id="CHEBI:49552"/>
        <label>3</label>
    </ligand>
</feature>
<feature type="binding site" evidence="1">
    <location>
        <position position="20"/>
    </location>
    <ligand>
        <name>Cu(+)</name>
        <dbReference type="ChEBI" id="CHEBI:49552"/>
        <label>4</label>
    </ligand>
</feature>
<feature type="binding site" evidence="1">
    <location>
        <position position="23"/>
    </location>
    <ligand>
        <name>Cu(+)</name>
        <dbReference type="ChEBI" id="CHEBI:49552"/>
        <label>1</label>
    </ligand>
</feature>
<feature type="binding site" evidence="1">
    <location>
        <position position="23"/>
    </location>
    <ligand>
        <name>Cu(+)</name>
        <dbReference type="ChEBI" id="CHEBI:49552"/>
        <label>2</label>
    </ligand>
</feature>
<protein>
    <recommendedName>
        <fullName>Metallothionein</fullName>
        <shortName>MT</shortName>
    </recommendedName>
</protein>
<organism>
    <name type="scientific">Agaricus bisporus</name>
    <name type="common">White button mushroom</name>
    <dbReference type="NCBI Taxonomy" id="5341"/>
    <lineage>
        <taxon>Eukaryota</taxon>
        <taxon>Fungi</taxon>
        <taxon>Dikarya</taxon>
        <taxon>Basidiomycota</taxon>
        <taxon>Agaricomycotina</taxon>
        <taxon>Agaricomycetes</taxon>
        <taxon>Agaricomycetidae</taxon>
        <taxon>Agaricales</taxon>
        <taxon>Agaricineae</taxon>
        <taxon>Agaricaceae</taxon>
        <taxon>Agaricus</taxon>
    </lineage>
</organism>
<accession>P04358</accession>
<proteinExistence type="evidence at protein level"/>
<name>MT_AGABI</name>
<comment type="function">
    <text>The metallothioneins are involved in the cellular sequestration of toxic metal ions. Binds six copper (cuprous) ions.</text>
</comment>
<comment type="miscellaneous">
    <text>The absorption, luminescent, and stereo-optical properties of the copper MT are attributed to the metal-thiolate complex because they are not present in the apoprotein.</text>
</comment>
<comment type="similarity">
    <text evidence="2">Belongs to the metallothionein superfamily. Type 8 family.</text>
</comment>
<evidence type="ECO:0000250" key="1">
    <source>
        <dbReference type="UniProtKB" id="P02807"/>
    </source>
</evidence>
<evidence type="ECO:0000305" key="2"/>
<reference key="1">
    <citation type="journal article" date="1985" name="Biochemistry">
        <title>Copper metallothionein from the fungus Agaricus bisporus: chemical and spectroscopic properties.</title>
        <authorList>
            <person name="Muenger K."/>
            <person name="Lerch K."/>
        </authorList>
    </citation>
    <scope>PROTEIN SEQUENCE</scope>
    <source>
        <strain>A-32</strain>
        <tissue>Mycelium</tissue>
    </source>
</reference>
<keyword id="KW-0186">Copper</keyword>
<keyword id="KW-0903">Direct protein sequencing</keyword>
<keyword id="KW-0479">Metal-binding</keyword>
<keyword id="KW-0480">Metal-thiolate cluster</keyword>
<sequence>GDCGCSGASSCTCASGQCTCSGCGK</sequence>